<organism>
    <name type="scientific">Bradyrhizobium diazoefficiens (strain JCM 10833 / BCRC 13528 / IAM 13628 / NBRC 14792 / USDA 110)</name>
    <dbReference type="NCBI Taxonomy" id="224911"/>
    <lineage>
        <taxon>Bacteria</taxon>
        <taxon>Pseudomonadati</taxon>
        <taxon>Pseudomonadota</taxon>
        <taxon>Alphaproteobacteria</taxon>
        <taxon>Hyphomicrobiales</taxon>
        <taxon>Nitrobacteraceae</taxon>
        <taxon>Bradyrhizobium</taxon>
    </lineage>
</organism>
<sequence length="252" mass="27807">MSNAAAPATEGPDRSDAPAHVAIIMDGNGRWAAARGLPRAEGHRRGVEALRRVVRASHELGIRYLTIFSFSSENWSRPASEIGDLFGLLRRFIRNDLASLHRDGVKVRIIGERDGLESDICALLNEAEELTRDNSRLTLVVAFNYGSRQEIAKAAQKLAREVAEGRRDPATIDAETLGAHLDAPDIPDPDLIIRTSGEQRLSNFLMWQAAYSELVFVPIHWPDFDKAALEGAIAEFARRERRFGGLVAKTAS</sequence>
<comment type="function">
    <text evidence="1">Catalyzes the condensation of isopentenyl diphosphate (IPP) with allylic pyrophosphates generating different type of terpenoids.</text>
</comment>
<comment type="cofactor">
    <cofactor evidence="1">
        <name>Mg(2+)</name>
        <dbReference type="ChEBI" id="CHEBI:18420"/>
    </cofactor>
    <text evidence="1">Binds 2 magnesium ions per subunit.</text>
</comment>
<comment type="subunit">
    <text evidence="1">Homodimer.</text>
</comment>
<comment type="similarity">
    <text evidence="1">Belongs to the UPP synthase family.</text>
</comment>
<dbReference type="EC" id="2.5.1.-" evidence="1"/>
<dbReference type="EMBL" id="BA000040">
    <property type="protein sequence ID" value="BAC50122.1"/>
    <property type="molecule type" value="Genomic_DNA"/>
</dbReference>
<dbReference type="RefSeq" id="NP_771497.1">
    <property type="nucleotide sequence ID" value="NC_004463.1"/>
</dbReference>
<dbReference type="RefSeq" id="WP_011087625.1">
    <property type="nucleotide sequence ID" value="NC_004463.1"/>
</dbReference>
<dbReference type="SMR" id="Q89KP7"/>
<dbReference type="FunCoup" id="Q89KP7">
    <property type="interactions" value="610"/>
</dbReference>
<dbReference type="STRING" id="224911.AAV28_21595"/>
<dbReference type="EnsemblBacteria" id="BAC50122">
    <property type="protein sequence ID" value="BAC50122"/>
    <property type="gene ID" value="BAC50122"/>
</dbReference>
<dbReference type="GeneID" id="46491860"/>
<dbReference type="KEGG" id="bja:bll4857"/>
<dbReference type="PATRIC" id="fig|224911.44.peg.4702"/>
<dbReference type="eggNOG" id="COG0020">
    <property type="taxonomic scope" value="Bacteria"/>
</dbReference>
<dbReference type="HOGENOM" id="CLU_038505_1_1_5"/>
<dbReference type="InParanoid" id="Q89KP7"/>
<dbReference type="OrthoDB" id="4191603at2"/>
<dbReference type="PhylomeDB" id="Q89KP7"/>
<dbReference type="Proteomes" id="UP000002526">
    <property type="component" value="Chromosome"/>
</dbReference>
<dbReference type="GO" id="GO:0005829">
    <property type="term" value="C:cytosol"/>
    <property type="evidence" value="ECO:0000318"/>
    <property type="project" value="GO_Central"/>
</dbReference>
<dbReference type="GO" id="GO:0008834">
    <property type="term" value="F:ditrans,polycis-undecaprenyl-diphosphate synthase [(2E,6E)-farnesyl-diphosphate specific] activity"/>
    <property type="evidence" value="ECO:0000318"/>
    <property type="project" value="GO_Central"/>
</dbReference>
<dbReference type="GO" id="GO:0000287">
    <property type="term" value="F:magnesium ion binding"/>
    <property type="evidence" value="ECO:0000318"/>
    <property type="project" value="GO_Central"/>
</dbReference>
<dbReference type="GO" id="GO:0016094">
    <property type="term" value="P:polyprenol biosynthetic process"/>
    <property type="evidence" value="ECO:0000318"/>
    <property type="project" value="GO_Central"/>
</dbReference>
<dbReference type="CDD" id="cd00475">
    <property type="entry name" value="Cis_IPPS"/>
    <property type="match status" value="1"/>
</dbReference>
<dbReference type="FunFam" id="3.40.1180.10:FF:000001">
    <property type="entry name" value="(2E,6E)-farnesyl-diphosphate-specific ditrans,polycis-undecaprenyl-diphosphate synthase"/>
    <property type="match status" value="1"/>
</dbReference>
<dbReference type="Gene3D" id="3.40.1180.10">
    <property type="entry name" value="Decaprenyl diphosphate synthase-like"/>
    <property type="match status" value="1"/>
</dbReference>
<dbReference type="HAMAP" id="MF_01139">
    <property type="entry name" value="ISPT"/>
    <property type="match status" value="1"/>
</dbReference>
<dbReference type="InterPro" id="IPR001441">
    <property type="entry name" value="UPP_synth-like"/>
</dbReference>
<dbReference type="InterPro" id="IPR018520">
    <property type="entry name" value="UPP_synth-like_CS"/>
</dbReference>
<dbReference type="InterPro" id="IPR036424">
    <property type="entry name" value="UPP_synth-like_sf"/>
</dbReference>
<dbReference type="NCBIfam" id="NF011408">
    <property type="entry name" value="PRK14834.1"/>
    <property type="match status" value="1"/>
</dbReference>
<dbReference type="NCBIfam" id="TIGR00055">
    <property type="entry name" value="uppS"/>
    <property type="match status" value="1"/>
</dbReference>
<dbReference type="PANTHER" id="PTHR10291:SF0">
    <property type="entry name" value="DEHYDRODOLICHYL DIPHOSPHATE SYNTHASE 2"/>
    <property type="match status" value="1"/>
</dbReference>
<dbReference type="PANTHER" id="PTHR10291">
    <property type="entry name" value="DEHYDRODOLICHYL DIPHOSPHATE SYNTHASE FAMILY MEMBER"/>
    <property type="match status" value="1"/>
</dbReference>
<dbReference type="Pfam" id="PF01255">
    <property type="entry name" value="Prenyltransf"/>
    <property type="match status" value="1"/>
</dbReference>
<dbReference type="SUPFAM" id="SSF64005">
    <property type="entry name" value="Undecaprenyl diphosphate synthase"/>
    <property type="match status" value="1"/>
</dbReference>
<dbReference type="PROSITE" id="PS01066">
    <property type="entry name" value="UPP_SYNTHASE"/>
    <property type="match status" value="1"/>
</dbReference>
<reference key="1">
    <citation type="journal article" date="2002" name="DNA Res.">
        <title>Complete genomic sequence of nitrogen-fixing symbiotic bacterium Bradyrhizobium japonicum USDA110.</title>
        <authorList>
            <person name="Kaneko T."/>
            <person name="Nakamura Y."/>
            <person name="Sato S."/>
            <person name="Minamisawa K."/>
            <person name="Uchiumi T."/>
            <person name="Sasamoto S."/>
            <person name="Watanabe A."/>
            <person name="Idesawa K."/>
            <person name="Iriguchi M."/>
            <person name="Kawashima K."/>
            <person name="Kohara M."/>
            <person name="Matsumoto M."/>
            <person name="Shimpo S."/>
            <person name="Tsuruoka H."/>
            <person name="Wada T."/>
            <person name="Yamada M."/>
            <person name="Tabata S."/>
        </authorList>
    </citation>
    <scope>NUCLEOTIDE SEQUENCE [LARGE SCALE GENOMIC DNA]</scope>
    <source>
        <strain>JCM 10833 / BCRC 13528 / IAM 13628 / NBRC 14792 / USDA 110</strain>
    </source>
</reference>
<proteinExistence type="inferred from homology"/>
<protein>
    <recommendedName>
        <fullName evidence="1">Isoprenyl transferase 2</fullName>
        <ecNumber evidence="1">2.5.1.-</ecNumber>
    </recommendedName>
</protein>
<accession>Q89KP7</accession>
<name>ISPT2_BRADU</name>
<feature type="chain" id="PRO_0000123580" description="Isoprenyl transferase 2">
    <location>
        <begin position="1"/>
        <end position="252"/>
    </location>
</feature>
<feature type="active site" evidence="1">
    <location>
        <position position="26"/>
    </location>
</feature>
<feature type="active site" description="Proton acceptor" evidence="1">
    <location>
        <position position="74"/>
    </location>
</feature>
<feature type="binding site" evidence="1">
    <location>
        <position position="26"/>
    </location>
    <ligand>
        <name>Mg(2+)</name>
        <dbReference type="ChEBI" id="CHEBI:18420"/>
    </ligand>
</feature>
<feature type="binding site" evidence="1">
    <location>
        <begin position="27"/>
        <end position="30"/>
    </location>
    <ligand>
        <name>substrate</name>
    </ligand>
</feature>
<feature type="binding site" evidence="1">
    <location>
        <position position="31"/>
    </location>
    <ligand>
        <name>substrate</name>
    </ligand>
</feature>
<feature type="binding site" evidence="1">
    <location>
        <position position="39"/>
    </location>
    <ligand>
        <name>substrate</name>
    </ligand>
</feature>
<feature type="binding site" evidence="1">
    <location>
        <position position="43"/>
    </location>
    <ligand>
        <name>substrate</name>
    </ligand>
</feature>
<feature type="binding site" evidence="1">
    <location>
        <begin position="71"/>
        <end position="73"/>
    </location>
    <ligand>
        <name>substrate</name>
    </ligand>
</feature>
<feature type="binding site" evidence="1">
    <location>
        <position position="75"/>
    </location>
    <ligand>
        <name>substrate</name>
    </ligand>
</feature>
<feature type="binding site" evidence="1">
    <location>
        <position position="77"/>
    </location>
    <ligand>
        <name>substrate</name>
    </ligand>
</feature>
<feature type="binding site" evidence="1">
    <location>
        <position position="194"/>
    </location>
    <ligand>
        <name>substrate</name>
    </ligand>
</feature>
<feature type="binding site" evidence="1">
    <location>
        <begin position="200"/>
        <end position="202"/>
    </location>
    <ligand>
        <name>substrate</name>
    </ligand>
</feature>
<feature type="binding site" evidence="1">
    <location>
        <position position="213"/>
    </location>
    <ligand>
        <name>Mg(2+)</name>
        <dbReference type="ChEBI" id="CHEBI:18420"/>
    </ligand>
</feature>
<keyword id="KW-0460">Magnesium</keyword>
<keyword id="KW-0479">Metal-binding</keyword>
<keyword id="KW-1185">Reference proteome</keyword>
<keyword id="KW-0808">Transferase</keyword>
<evidence type="ECO:0000255" key="1">
    <source>
        <dbReference type="HAMAP-Rule" id="MF_01139"/>
    </source>
</evidence>
<gene>
    <name evidence="1" type="primary">uppS2</name>
    <name type="ordered locus">bll4857</name>
</gene>